<keyword id="KW-0106">Calcium</keyword>
<keyword id="KW-0186">Copper</keyword>
<keyword id="KW-0249">Electron transport</keyword>
<keyword id="KW-0349">Heme</keyword>
<keyword id="KW-0408">Iron</keyword>
<keyword id="KW-0460">Magnesium</keyword>
<keyword id="KW-0472">Membrane</keyword>
<keyword id="KW-0479">Metal-binding</keyword>
<keyword id="KW-0496">Mitochondrion</keyword>
<keyword id="KW-0999">Mitochondrion inner membrane</keyword>
<keyword id="KW-0679">Respiratory chain</keyword>
<keyword id="KW-1278">Translocase</keyword>
<keyword id="KW-0812">Transmembrane</keyword>
<keyword id="KW-1133">Transmembrane helix</keyword>
<keyword id="KW-0813">Transport</keyword>
<organism>
    <name type="scientific">Cyanidium caldarium</name>
    <name type="common">Red alga</name>
    <dbReference type="NCBI Taxonomy" id="2771"/>
    <lineage>
        <taxon>Eukaryota</taxon>
        <taxon>Rhodophyta</taxon>
        <taxon>Bangiophyceae</taxon>
        <taxon>Cyanidiales</taxon>
        <taxon>Cyanidiaceae</taxon>
        <taxon>Cyanidium</taxon>
    </lineage>
</organism>
<comment type="function">
    <text evidence="2">Component of the cytochrome c oxidase, the last enzyme in the mitochondrial electron transport chain which drives oxidative phosphorylation. The respiratory chain contains 3 multisubunit complexes succinate dehydrogenase (complex II, CII), ubiquinol-cytochrome c oxidoreductase (cytochrome b-c1 complex, complex III, CIII) and cytochrome c oxidase (complex IV, CIV), that cooperate to transfer electrons derived from NADH and succinate to molecular oxygen, creating an electrochemical gradient over the inner membrane that drives transmembrane transport and the ATP synthase. Cytochrome c oxidase is the component of the respiratory chain that catalyzes the reduction of oxygen to water. Electrons originating from reduced cytochrome c in the intermembrane space (IMS) are transferred via the dinuclear copper A center (CU(A)) of subunit 2 and heme A of subunit 1 to the active site in subunit 1, a binuclear center (BNC) formed by heme A3 and copper B (CU(B)). The BNC reduces molecular oxygen to 2 water molecules using 4 electrons from cytochrome c in the IMS and 4 protons from the mitochondrial matrix.</text>
</comment>
<comment type="catalytic activity">
    <reaction evidence="2">
        <text>4 Fe(II)-[cytochrome c] + O2 + 8 H(+)(in) = 4 Fe(III)-[cytochrome c] + 2 H2O + 4 H(+)(out)</text>
        <dbReference type="Rhea" id="RHEA:11436"/>
        <dbReference type="Rhea" id="RHEA-COMP:10350"/>
        <dbReference type="Rhea" id="RHEA-COMP:14399"/>
        <dbReference type="ChEBI" id="CHEBI:15377"/>
        <dbReference type="ChEBI" id="CHEBI:15378"/>
        <dbReference type="ChEBI" id="CHEBI:15379"/>
        <dbReference type="ChEBI" id="CHEBI:29033"/>
        <dbReference type="ChEBI" id="CHEBI:29034"/>
        <dbReference type="EC" id="7.1.1.9"/>
    </reaction>
    <physiologicalReaction direction="left-to-right" evidence="2">
        <dbReference type="Rhea" id="RHEA:11437"/>
    </physiologicalReaction>
</comment>
<comment type="cofactor">
    <cofactor evidence="2">
        <name>heme</name>
        <dbReference type="ChEBI" id="CHEBI:30413"/>
    </cofactor>
    <text evidence="2">Binds 2 heme A groups non-covalently per subunit.</text>
</comment>
<comment type="cofactor">
    <cofactor evidence="2">
        <name>Cu cation</name>
        <dbReference type="ChEBI" id="CHEBI:23378"/>
    </cofactor>
    <text evidence="2">Binds a copper B center.</text>
</comment>
<comment type="pathway">
    <text evidence="2">Energy metabolism; oxidative phosphorylation.</text>
</comment>
<comment type="subunit">
    <text evidence="2">Component of the cytochrome c oxidase (complex IV, CIV), a multisubunit enzyme composed of a catalytic core of 3 subunits and several supernumerary subunits. The complex exists as a monomer or a dimer and forms supercomplexes (SCs) in the inner mitochondrial membrane with ubiquinol-cytochrome c oxidoreductase (cytochrome b-c1 complex, complex III, CIII).</text>
</comment>
<comment type="subcellular location">
    <subcellularLocation>
        <location evidence="2">Mitochondrion inner membrane</location>
        <topology evidence="2">Multi-pass membrane protein</topology>
    </subcellularLocation>
</comment>
<comment type="similarity">
    <text evidence="4">Belongs to the heme-copper respiratory oxidase family.</text>
</comment>
<geneLocation type="mitochondrion"/>
<protein>
    <recommendedName>
        <fullName>Cytochrome c oxidase subunit 1</fullName>
        <ecNumber>7.1.1.9</ecNumber>
    </recommendedName>
    <alternativeName>
        <fullName>Cytochrome c oxidase polypeptide I</fullName>
    </alternativeName>
</protein>
<proteinExistence type="inferred from homology"/>
<dbReference type="EC" id="7.1.1.9"/>
<dbReference type="EMBL" id="Z48930">
    <property type="protein sequence ID" value="CAA88773.1"/>
    <property type="molecule type" value="Genomic_DNA"/>
</dbReference>
<dbReference type="PIR" id="S62763">
    <property type="entry name" value="S62763"/>
</dbReference>
<dbReference type="SMR" id="P48867"/>
<dbReference type="UniPathway" id="UPA00705"/>
<dbReference type="GO" id="GO:0005743">
    <property type="term" value="C:mitochondrial inner membrane"/>
    <property type="evidence" value="ECO:0007669"/>
    <property type="project" value="UniProtKB-SubCell"/>
</dbReference>
<dbReference type="GO" id="GO:0045277">
    <property type="term" value="C:respiratory chain complex IV"/>
    <property type="evidence" value="ECO:0007669"/>
    <property type="project" value="InterPro"/>
</dbReference>
<dbReference type="GO" id="GO:0004129">
    <property type="term" value="F:cytochrome-c oxidase activity"/>
    <property type="evidence" value="ECO:0007669"/>
    <property type="project" value="UniProtKB-EC"/>
</dbReference>
<dbReference type="GO" id="GO:0020037">
    <property type="term" value="F:heme binding"/>
    <property type="evidence" value="ECO:0007669"/>
    <property type="project" value="InterPro"/>
</dbReference>
<dbReference type="GO" id="GO:0046872">
    <property type="term" value="F:metal ion binding"/>
    <property type="evidence" value="ECO:0007669"/>
    <property type="project" value="UniProtKB-KW"/>
</dbReference>
<dbReference type="GO" id="GO:0015990">
    <property type="term" value="P:electron transport coupled proton transport"/>
    <property type="evidence" value="ECO:0007669"/>
    <property type="project" value="InterPro"/>
</dbReference>
<dbReference type="GO" id="GO:0006123">
    <property type="term" value="P:mitochondrial electron transport, cytochrome c to oxygen"/>
    <property type="evidence" value="ECO:0007669"/>
    <property type="project" value="TreeGrafter"/>
</dbReference>
<dbReference type="CDD" id="cd01663">
    <property type="entry name" value="Cyt_c_Oxidase_I"/>
    <property type="match status" value="1"/>
</dbReference>
<dbReference type="FunFam" id="1.20.210.10:FF:000001">
    <property type="entry name" value="Cytochrome c oxidase subunit 1"/>
    <property type="match status" value="1"/>
</dbReference>
<dbReference type="Gene3D" id="1.20.210.10">
    <property type="entry name" value="Cytochrome c oxidase-like, subunit I domain"/>
    <property type="match status" value="1"/>
</dbReference>
<dbReference type="InterPro" id="IPR023616">
    <property type="entry name" value="Cyt_c_oxase-like_su1_dom"/>
</dbReference>
<dbReference type="InterPro" id="IPR036927">
    <property type="entry name" value="Cyt_c_oxase-like_su1_sf"/>
</dbReference>
<dbReference type="InterPro" id="IPR000883">
    <property type="entry name" value="Cyt_C_Oxase_1"/>
</dbReference>
<dbReference type="InterPro" id="IPR023615">
    <property type="entry name" value="Cyt_c_Oxase_su1_BS"/>
</dbReference>
<dbReference type="InterPro" id="IPR033944">
    <property type="entry name" value="Cyt_c_oxase_su1_dom"/>
</dbReference>
<dbReference type="InterPro" id="IPR014241">
    <property type="entry name" value="Cyt_c_oxidase_su1_bac"/>
</dbReference>
<dbReference type="NCBIfam" id="TIGR02891">
    <property type="entry name" value="CtaD_CoxA"/>
    <property type="match status" value="1"/>
</dbReference>
<dbReference type="PANTHER" id="PTHR10422">
    <property type="entry name" value="CYTOCHROME C OXIDASE SUBUNIT 1"/>
    <property type="match status" value="1"/>
</dbReference>
<dbReference type="PANTHER" id="PTHR10422:SF18">
    <property type="entry name" value="CYTOCHROME C OXIDASE SUBUNIT 1"/>
    <property type="match status" value="1"/>
</dbReference>
<dbReference type="Pfam" id="PF00115">
    <property type="entry name" value="COX1"/>
    <property type="match status" value="1"/>
</dbReference>
<dbReference type="PRINTS" id="PR01165">
    <property type="entry name" value="CYCOXIDASEI"/>
</dbReference>
<dbReference type="SUPFAM" id="SSF81442">
    <property type="entry name" value="Cytochrome c oxidase subunit I-like"/>
    <property type="match status" value="1"/>
</dbReference>
<dbReference type="PROSITE" id="PS50855">
    <property type="entry name" value="COX1"/>
    <property type="match status" value="1"/>
</dbReference>
<dbReference type="PROSITE" id="PS00077">
    <property type="entry name" value="COX1_CUB"/>
    <property type="match status" value="1"/>
</dbReference>
<name>COX1_CYACA</name>
<feature type="chain" id="PRO_0000183319" description="Cytochrome c oxidase subunit 1">
    <location>
        <begin position="1"/>
        <end position="526"/>
    </location>
</feature>
<feature type="transmembrane region" description="Helical" evidence="3">
    <location>
        <begin position="17"/>
        <end position="37"/>
    </location>
</feature>
<feature type="transmembrane region" description="Helical" evidence="3">
    <location>
        <begin position="67"/>
        <end position="87"/>
    </location>
</feature>
<feature type="transmembrane region" description="Helical" evidence="3">
    <location>
        <begin position="104"/>
        <end position="124"/>
    </location>
</feature>
<feature type="transmembrane region" description="Helical" evidence="3">
    <location>
        <begin position="149"/>
        <end position="169"/>
    </location>
</feature>
<feature type="transmembrane region" description="Helical" evidence="3">
    <location>
        <begin position="187"/>
        <end position="207"/>
    </location>
</feature>
<feature type="transmembrane region" description="Helical" evidence="3">
    <location>
        <begin position="238"/>
        <end position="258"/>
    </location>
</feature>
<feature type="transmembrane region" description="Helical" evidence="3">
    <location>
        <begin position="270"/>
        <end position="290"/>
    </location>
</feature>
<feature type="transmembrane region" description="Helical" evidence="3">
    <location>
        <begin position="308"/>
        <end position="328"/>
    </location>
</feature>
<feature type="transmembrane region" description="Helical" evidence="3">
    <location>
        <begin position="341"/>
        <end position="361"/>
    </location>
</feature>
<feature type="transmembrane region" description="Helical" evidence="3">
    <location>
        <begin position="380"/>
        <end position="400"/>
    </location>
</feature>
<feature type="transmembrane region" description="Helical" evidence="3">
    <location>
        <begin position="417"/>
        <end position="437"/>
    </location>
</feature>
<feature type="transmembrane region" description="Helical" evidence="3">
    <location>
        <begin position="464"/>
        <end position="484"/>
    </location>
</feature>
<feature type="binding site" evidence="2">
    <location>
        <position position="42"/>
    </location>
    <ligand>
        <name>Ca(2+)</name>
        <dbReference type="ChEBI" id="CHEBI:29108"/>
    </ligand>
</feature>
<feature type="binding site" evidence="2">
    <location>
        <position position="47"/>
    </location>
    <ligand>
        <name>Ca(2+)</name>
        <dbReference type="ChEBI" id="CHEBI:29108"/>
    </ligand>
</feature>
<feature type="binding site" description="axial binding residue" evidence="2">
    <location>
        <position position="65"/>
    </location>
    <ligand>
        <name>Fe(II)-heme a</name>
        <dbReference type="ChEBI" id="CHEBI:61715"/>
        <note>low-spin</note>
    </ligand>
    <ligandPart>
        <name>Fe</name>
        <dbReference type="ChEBI" id="CHEBI:18248"/>
    </ligandPart>
</feature>
<feature type="binding site" evidence="2">
    <location>
        <position position="244"/>
    </location>
    <ligand>
        <name>Cu cation</name>
        <dbReference type="ChEBI" id="CHEBI:23378"/>
        <label>B</label>
    </ligand>
</feature>
<feature type="binding site" evidence="1">
    <location>
        <position position="248"/>
    </location>
    <ligand>
        <name>O2</name>
        <dbReference type="ChEBI" id="CHEBI:15379"/>
    </ligand>
</feature>
<feature type="binding site" evidence="2">
    <location>
        <position position="293"/>
    </location>
    <ligand>
        <name>Cu cation</name>
        <dbReference type="ChEBI" id="CHEBI:23378"/>
        <label>B</label>
    </ligand>
</feature>
<feature type="binding site" evidence="2">
    <location>
        <position position="294"/>
    </location>
    <ligand>
        <name>Cu cation</name>
        <dbReference type="ChEBI" id="CHEBI:23378"/>
        <label>B</label>
    </ligand>
</feature>
<feature type="binding site" evidence="2">
    <location>
        <position position="371"/>
    </location>
    <ligand>
        <name>Mg(2+)</name>
        <dbReference type="ChEBI" id="CHEBI:18420"/>
        <note>ligand shared with subunit 2</note>
    </ligand>
</feature>
<feature type="binding site" evidence="2">
    <location>
        <position position="372"/>
    </location>
    <ligand>
        <name>Mg(2+)</name>
        <dbReference type="ChEBI" id="CHEBI:18420"/>
        <note>ligand shared with subunit 2</note>
    </ligand>
</feature>
<feature type="binding site" description="axial binding residue" evidence="2">
    <location>
        <position position="379"/>
    </location>
    <ligand>
        <name>heme a3</name>
        <dbReference type="ChEBI" id="CHEBI:83282"/>
        <note>high-spin</note>
    </ligand>
    <ligandPart>
        <name>Fe</name>
        <dbReference type="ChEBI" id="CHEBI:18248"/>
    </ligandPart>
</feature>
<feature type="binding site" description="axial binding residue" evidence="2">
    <location>
        <position position="381"/>
    </location>
    <ligand>
        <name>Fe(II)-heme a</name>
        <dbReference type="ChEBI" id="CHEBI:61715"/>
        <note>low-spin</note>
    </ligand>
    <ligandPart>
        <name>Fe</name>
        <dbReference type="ChEBI" id="CHEBI:18248"/>
    </ligandPart>
</feature>
<feature type="binding site" evidence="2">
    <location>
        <position position="444"/>
    </location>
    <ligand>
        <name>Ca(2+)</name>
        <dbReference type="ChEBI" id="CHEBI:29108"/>
    </ligand>
</feature>
<feature type="cross-link" description="1'-histidyl-3'-tyrosine (His-Tyr)" evidence="2">
    <location>
        <begin position="244"/>
        <end position="248"/>
    </location>
</feature>
<gene>
    <name type="primary">COX1</name>
    <name type="synonym">COXI</name>
</gene>
<reference key="1">
    <citation type="thesis" date="1995" institute="Justus Liebig University / Frankfurt" country="Germany">
        <authorList>
            <person name="Viehmann S."/>
        </authorList>
    </citation>
    <scope>NUCLEOTIDE SEQUENCE [GENOMIC DNA]</scope>
    <source>
        <strain>RK-1</strain>
    </source>
</reference>
<sequence>MSRWIQRWFFSTNHKDIGTLYLIFGAFSGLLGASISLLMRIELSHPGNQVLIGNHQLYNVLVTAHGLLILFFMVIPTLMGGFGNWFVPLIIGAPDMAFPRLNNISFWLMPPSLILLLASAFVETGAGTGWTLYPPLSSVQAHSGGAVDLAIFSLHISGISSILGASNFIATIFNIRNPGQNLYRIPLFVWSVLVTAFIILLTFPVLAGAITILLTDRNFNTSFFDSSGGGDPVLFQHLFWFFGHPEVYILVLPAFGIISQVVSTFSRKPVFGYVGIIYALISIRILGSMVWAHHMFTIGMDVDTRAYFTAASLLIAVPTGIKVFSWIATMWKGSISLKTPMLFAIGFIILFTVGGLTGLVVANSGLDISLHDTYYVVAHFHYVLSIGALFGIFAGFYYWIGKICGKQYSETLGQIHFWITFIGVNLTFFPMHFLGLAGIPRRIPDYPDAYEGWNIVSTYGAKVSIIGTILFFYVVYLAFTNGLISEPNPWSLRRERLDSSSRTTEWLIASPPIYHTFNEIPVIKET</sequence>
<evidence type="ECO:0000250" key="1">
    <source>
        <dbReference type="UniProtKB" id="P00396"/>
    </source>
</evidence>
<evidence type="ECO:0000250" key="2">
    <source>
        <dbReference type="UniProtKB" id="P00401"/>
    </source>
</evidence>
<evidence type="ECO:0000255" key="3"/>
<evidence type="ECO:0000305" key="4"/>
<accession>P48867</accession>